<organism>
    <name type="scientific">Microcystis aeruginosa (strain NIES-843 / IAM M-2473)</name>
    <dbReference type="NCBI Taxonomy" id="449447"/>
    <lineage>
        <taxon>Bacteria</taxon>
        <taxon>Bacillati</taxon>
        <taxon>Cyanobacteriota</taxon>
        <taxon>Cyanophyceae</taxon>
        <taxon>Oscillatoriophycideae</taxon>
        <taxon>Chroococcales</taxon>
        <taxon>Microcystaceae</taxon>
        <taxon>Microcystis</taxon>
    </lineage>
</organism>
<keyword id="KW-0687">Ribonucleoprotein</keyword>
<keyword id="KW-0689">Ribosomal protein</keyword>
<gene>
    <name evidence="1" type="primary">rpmJ</name>
    <name type="ordered locus">MAE_52565</name>
</gene>
<dbReference type="EMBL" id="AP009552">
    <property type="protein sequence ID" value="BAG48293.1"/>
    <property type="molecule type" value="Genomic_DNA"/>
</dbReference>
<dbReference type="RefSeq" id="WP_012593611.1">
    <property type="nucleotide sequence ID" value="NC_010296.1"/>
</dbReference>
<dbReference type="SMR" id="B3DFA8"/>
<dbReference type="STRING" id="449447.MAE_52565"/>
<dbReference type="PaxDb" id="449447-MAE_52565"/>
<dbReference type="EnsemblBacteria" id="BAG48293">
    <property type="protein sequence ID" value="BAG48293"/>
    <property type="gene ID" value="MAE_52565"/>
</dbReference>
<dbReference type="GeneID" id="66709337"/>
<dbReference type="KEGG" id="mar:MAE_52565"/>
<dbReference type="eggNOG" id="COG0257">
    <property type="taxonomic scope" value="Bacteria"/>
</dbReference>
<dbReference type="HOGENOM" id="CLU_135723_6_2_3"/>
<dbReference type="BioCyc" id="MAER449447:MAE_RS30815-MONOMER"/>
<dbReference type="Proteomes" id="UP000001510">
    <property type="component" value="Chromosome"/>
</dbReference>
<dbReference type="GO" id="GO:0005737">
    <property type="term" value="C:cytoplasm"/>
    <property type="evidence" value="ECO:0007669"/>
    <property type="project" value="UniProtKB-ARBA"/>
</dbReference>
<dbReference type="GO" id="GO:1990904">
    <property type="term" value="C:ribonucleoprotein complex"/>
    <property type="evidence" value="ECO:0007669"/>
    <property type="project" value="UniProtKB-KW"/>
</dbReference>
<dbReference type="GO" id="GO:0005840">
    <property type="term" value="C:ribosome"/>
    <property type="evidence" value="ECO:0007669"/>
    <property type="project" value="UniProtKB-KW"/>
</dbReference>
<dbReference type="GO" id="GO:0003735">
    <property type="term" value="F:structural constituent of ribosome"/>
    <property type="evidence" value="ECO:0007669"/>
    <property type="project" value="InterPro"/>
</dbReference>
<dbReference type="GO" id="GO:0006412">
    <property type="term" value="P:translation"/>
    <property type="evidence" value="ECO:0007669"/>
    <property type="project" value="UniProtKB-UniRule"/>
</dbReference>
<dbReference type="HAMAP" id="MF_00251">
    <property type="entry name" value="Ribosomal_bL36"/>
    <property type="match status" value="1"/>
</dbReference>
<dbReference type="InterPro" id="IPR000473">
    <property type="entry name" value="Ribosomal_bL36"/>
</dbReference>
<dbReference type="InterPro" id="IPR035977">
    <property type="entry name" value="Ribosomal_bL36_sp"/>
</dbReference>
<dbReference type="NCBIfam" id="TIGR01022">
    <property type="entry name" value="rpmJ_bact"/>
    <property type="match status" value="1"/>
</dbReference>
<dbReference type="PANTHER" id="PTHR42888">
    <property type="entry name" value="50S RIBOSOMAL PROTEIN L36, CHLOROPLASTIC"/>
    <property type="match status" value="1"/>
</dbReference>
<dbReference type="PANTHER" id="PTHR42888:SF1">
    <property type="entry name" value="LARGE RIBOSOMAL SUBUNIT PROTEIN BL36C"/>
    <property type="match status" value="1"/>
</dbReference>
<dbReference type="Pfam" id="PF00444">
    <property type="entry name" value="Ribosomal_L36"/>
    <property type="match status" value="1"/>
</dbReference>
<dbReference type="SUPFAM" id="SSF57840">
    <property type="entry name" value="Ribosomal protein L36"/>
    <property type="match status" value="1"/>
</dbReference>
<dbReference type="PROSITE" id="PS00828">
    <property type="entry name" value="RIBOSOMAL_L36"/>
    <property type="match status" value="1"/>
</dbReference>
<protein>
    <recommendedName>
        <fullName evidence="1">Large ribosomal subunit protein bL36</fullName>
    </recommendedName>
    <alternativeName>
        <fullName evidence="2">50S ribosomal protein L36</fullName>
    </alternativeName>
</protein>
<sequence>MKVRASVKKMCEKCRVIRRRGRVMVICSNPKHKQRQG</sequence>
<accession>B3DFA8</accession>
<proteinExistence type="inferred from homology"/>
<reference key="1">
    <citation type="journal article" date="2007" name="DNA Res.">
        <title>Complete genomic structure of the bloom-forming toxic cyanobacterium Microcystis aeruginosa NIES-843.</title>
        <authorList>
            <person name="Kaneko T."/>
            <person name="Nakajima N."/>
            <person name="Okamoto S."/>
            <person name="Suzuki I."/>
            <person name="Tanabe Y."/>
            <person name="Tamaoki M."/>
            <person name="Nakamura Y."/>
            <person name="Kasai F."/>
            <person name="Watanabe A."/>
            <person name="Kawashima K."/>
            <person name="Kishida Y."/>
            <person name="Ono A."/>
            <person name="Shimizu Y."/>
            <person name="Takahashi C."/>
            <person name="Minami C."/>
            <person name="Fujishiro T."/>
            <person name="Kohara M."/>
            <person name="Katoh M."/>
            <person name="Nakazaki N."/>
            <person name="Nakayama S."/>
            <person name="Yamada M."/>
            <person name="Tabata S."/>
            <person name="Watanabe M.M."/>
        </authorList>
    </citation>
    <scope>NUCLEOTIDE SEQUENCE [LARGE SCALE GENOMIC DNA]</scope>
    <source>
        <strain>NIES-843 / IAM M-247</strain>
    </source>
</reference>
<name>RL36_MICAN</name>
<comment type="similarity">
    <text evidence="1">Belongs to the bacterial ribosomal protein bL36 family.</text>
</comment>
<feature type="chain" id="PRO_1000101045" description="Large ribosomal subunit protein bL36">
    <location>
        <begin position="1"/>
        <end position="37"/>
    </location>
</feature>
<evidence type="ECO:0000255" key="1">
    <source>
        <dbReference type="HAMAP-Rule" id="MF_00251"/>
    </source>
</evidence>
<evidence type="ECO:0000305" key="2"/>